<keyword id="KW-1185">Reference proteome</keyword>
<keyword id="KW-0687">Ribonucleoprotein</keyword>
<keyword id="KW-0689">Ribosomal protein</keyword>
<keyword id="KW-0694">RNA-binding</keyword>
<keyword id="KW-0699">rRNA-binding</keyword>
<comment type="function">
    <text evidence="1">One of the primary rRNA binding proteins, it binds directly to 16S rRNA where it nucleates assembly of the body of the 30S subunit.</text>
</comment>
<comment type="function">
    <text evidence="1">With S5 and S12 plays an important role in translational accuracy.</text>
</comment>
<comment type="subunit">
    <text evidence="1">Part of the 30S ribosomal subunit. Contacts protein S5. The interaction surface between S4 and S5 is involved in control of translational fidelity.</text>
</comment>
<comment type="similarity">
    <text evidence="1">Belongs to the universal ribosomal protein uS4 family.</text>
</comment>
<organism>
    <name type="scientific">Acidiphilium cryptum (strain JF-5)</name>
    <dbReference type="NCBI Taxonomy" id="349163"/>
    <lineage>
        <taxon>Bacteria</taxon>
        <taxon>Pseudomonadati</taxon>
        <taxon>Pseudomonadota</taxon>
        <taxon>Alphaproteobacteria</taxon>
        <taxon>Acetobacterales</taxon>
        <taxon>Acidocellaceae</taxon>
        <taxon>Acidiphilium</taxon>
    </lineage>
</organism>
<gene>
    <name evidence="1" type="primary">rpsD</name>
    <name type="ordered locus">Acry_0664</name>
</gene>
<accession>A5FWA3</accession>
<name>RS4_ACICJ</name>
<reference key="1">
    <citation type="submission" date="2007-05" db="EMBL/GenBank/DDBJ databases">
        <title>Complete sequence of chromosome of Acidiphilium cryptum JF-5.</title>
        <authorList>
            <consortium name="US DOE Joint Genome Institute"/>
            <person name="Copeland A."/>
            <person name="Lucas S."/>
            <person name="Lapidus A."/>
            <person name="Barry K."/>
            <person name="Detter J.C."/>
            <person name="Glavina del Rio T."/>
            <person name="Hammon N."/>
            <person name="Israni S."/>
            <person name="Dalin E."/>
            <person name="Tice H."/>
            <person name="Pitluck S."/>
            <person name="Sims D."/>
            <person name="Brettin T."/>
            <person name="Bruce D."/>
            <person name="Han C."/>
            <person name="Schmutz J."/>
            <person name="Larimer F."/>
            <person name="Land M."/>
            <person name="Hauser L."/>
            <person name="Kyrpides N."/>
            <person name="Kim E."/>
            <person name="Magnuson T."/>
            <person name="Richardson P."/>
        </authorList>
    </citation>
    <scope>NUCLEOTIDE SEQUENCE [LARGE SCALE GENOMIC DNA]</scope>
    <source>
        <strain>JF-5</strain>
    </source>
</reference>
<proteinExistence type="inferred from homology"/>
<protein>
    <recommendedName>
        <fullName evidence="1">Small ribosomal subunit protein uS4</fullName>
    </recommendedName>
    <alternativeName>
        <fullName evidence="3">30S ribosomal protein S4</fullName>
    </alternativeName>
</protein>
<sequence>MTKRTESKYKINRRLGVNLWGRPKSPINKREYGPGQHGQRRKKPSDFGVQLMAKQKLRGYYGNISEKQFYKYYEEAVRRRGDTSENLIELLERRLDAVVYRMKFAITPFAARQFVSHGHVLVNGRRVNISSYQVRDGDVVEVREKSKQLAMVLDSVQSAERDVPEYIEVDHRAMKGTFARAPKLADVPYPVQMEPNLVVEFYSR</sequence>
<feature type="chain" id="PRO_0000322257" description="Small ribosomal subunit protein uS4">
    <location>
        <begin position="1"/>
        <end position="204"/>
    </location>
</feature>
<feature type="domain" description="S4 RNA-binding" evidence="1">
    <location>
        <begin position="93"/>
        <end position="156"/>
    </location>
</feature>
<feature type="region of interest" description="Disordered" evidence="2">
    <location>
        <begin position="21"/>
        <end position="45"/>
    </location>
</feature>
<dbReference type="EMBL" id="CP000697">
    <property type="protein sequence ID" value="ABQ29885.1"/>
    <property type="molecule type" value="Genomic_DNA"/>
</dbReference>
<dbReference type="RefSeq" id="WP_007423933.1">
    <property type="nucleotide sequence ID" value="NC_009484.1"/>
</dbReference>
<dbReference type="SMR" id="A5FWA3"/>
<dbReference type="STRING" id="349163.Acry_0664"/>
<dbReference type="KEGG" id="acr:Acry_0664"/>
<dbReference type="eggNOG" id="COG0522">
    <property type="taxonomic scope" value="Bacteria"/>
</dbReference>
<dbReference type="HOGENOM" id="CLU_092403_0_0_5"/>
<dbReference type="Proteomes" id="UP000000245">
    <property type="component" value="Chromosome"/>
</dbReference>
<dbReference type="GO" id="GO:0015935">
    <property type="term" value="C:small ribosomal subunit"/>
    <property type="evidence" value="ECO:0007669"/>
    <property type="project" value="InterPro"/>
</dbReference>
<dbReference type="GO" id="GO:0019843">
    <property type="term" value="F:rRNA binding"/>
    <property type="evidence" value="ECO:0007669"/>
    <property type="project" value="UniProtKB-UniRule"/>
</dbReference>
<dbReference type="GO" id="GO:0003735">
    <property type="term" value="F:structural constituent of ribosome"/>
    <property type="evidence" value="ECO:0007669"/>
    <property type="project" value="InterPro"/>
</dbReference>
<dbReference type="GO" id="GO:0042274">
    <property type="term" value="P:ribosomal small subunit biogenesis"/>
    <property type="evidence" value="ECO:0007669"/>
    <property type="project" value="TreeGrafter"/>
</dbReference>
<dbReference type="GO" id="GO:0006412">
    <property type="term" value="P:translation"/>
    <property type="evidence" value="ECO:0007669"/>
    <property type="project" value="UniProtKB-UniRule"/>
</dbReference>
<dbReference type="CDD" id="cd00165">
    <property type="entry name" value="S4"/>
    <property type="match status" value="1"/>
</dbReference>
<dbReference type="FunFam" id="3.10.290.10:FF:000001">
    <property type="entry name" value="30S ribosomal protein S4"/>
    <property type="match status" value="1"/>
</dbReference>
<dbReference type="Gene3D" id="1.10.1050.10">
    <property type="entry name" value="Ribosomal Protein S4 Delta 41, Chain A, domain 1"/>
    <property type="match status" value="1"/>
</dbReference>
<dbReference type="Gene3D" id="3.10.290.10">
    <property type="entry name" value="RNA-binding S4 domain"/>
    <property type="match status" value="1"/>
</dbReference>
<dbReference type="HAMAP" id="MF_01306_B">
    <property type="entry name" value="Ribosomal_uS4_B"/>
    <property type="match status" value="1"/>
</dbReference>
<dbReference type="InterPro" id="IPR022801">
    <property type="entry name" value="Ribosomal_uS4"/>
</dbReference>
<dbReference type="InterPro" id="IPR005709">
    <property type="entry name" value="Ribosomal_uS4_bac-type"/>
</dbReference>
<dbReference type="InterPro" id="IPR018079">
    <property type="entry name" value="Ribosomal_uS4_CS"/>
</dbReference>
<dbReference type="InterPro" id="IPR001912">
    <property type="entry name" value="Ribosomal_uS4_N"/>
</dbReference>
<dbReference type="InterPro" id="IPR002942">
    <property type="entry name" value="S4_RNA-bd"/>
</dbReference>
<dbReference type="InterPro" id="IPR036986">
    <property type="entry name" value="S4_RNA-bd_sf"/>
</dbReference>
<dbReference type="NCBIfam" id="NF003717">
    <property type="entry name" value="PRK05327.1"/>
    <property type="match status" value="1"/>
</dbReference>
<dbReference type="NCBIfam" id="TIGR01017">
    <property type="entry name" value="rpsD_bact"/>
    <property type="match status" value="1"/>
</dbReference>
<dbReference type="PANTHER" id="PTHR11831">
    <property type="entry name" value="30S 40S RIBOSOMAL PROTEIN"/>
    <property type="match status" value="1"/>
</dbReference>
<dbReference type="PANTHER" id="PTHR11831:SF4">
    <property type="entry name" value="SMALL RIBOSOMAL SUBUNIT PROTEIN US4M"/>
    <property type="match status" value="1"/>
</dbReference>
<dbReference type="Pfam" id="PF00163">
    <property type="entry name" value="Ribosomal_S4"/>
    <property type="match status" value="1"/>
</dbReference>
<dbReference type="Pfam" id="PF01479">
    <property type="entry name" value="S4"/>
    <property type="match status" value="1"/>
</dbReference>
<dbReference type="SMART" id="SM01390">
    <property type="entry name" value="Ribosomal_S4"/>
    <property type="match status" value="1"/>
</dbReference>
<dbReference type="SMART" id="SM00363">
    <property type="entry name" value="S4"/>
    <property type="match status" value="1"/>
</dbReference>
<dbReference type="SUPFAM" id="SSF55174">
    <property type="entry name" value="Alpha-L RNA-binding motif"/>
    <property type="match status" value="1"/>
</dbReference>
<dbReference type="PROSITE" id="PS00632">
    <property type="entry name" value="RIBOSOMAL_S4"/>
    <property type="match status" value="1"/>
</dbReference>
<dbReference type="PROSITE" id="PS50889">
    <property type="entry name" value="S4"/>
    <property type="match status" value="1"/>
</dbReference>
<evidence type="ECO:0000255" key="1">
    <source>
        <dbReference type="HAMAP-Rule" id="MF_01306"/>
    </source>
</evidence>
<evidence type="ECO:0000256" key="2">
    <source>
        <dbReference type="SAM" id="MobiDB-lite"/>
    </source>
</evidence>
<evidence type="ECO:0000305" key="3"/>